<evidence type="ECO:0000250" key="1">
    <source>
        <dbReference type="UniProtKB" id="P23905"/>
    </source>
</evidence>
<evidence type="ECO:0000269" key="2">
    <source>
    </source>
</evidence>
<evidence type="ECO:0000269" key="3">
    <source>
    </source>
</evidence>
<evidence type="ECO:0000269" key="4">
    <source>
    </source>
</evidence>
<evidence type="ECO:0000269" key="5">
    <source>
    </source>
</evidence>
<evidence type="ECO:0000269" key="6">
    <source>
    </source>
</evidence>
<evidence type="ECO:0000269" key="7">
    <source>
    </source>
</evidence>
<evidence type="ECO:0000305" key="8"/>
<evidence type="ECO:0000305" key="9">
    <source>
    </source>
</evidence>
<evidence type="ECO:0000305" key="10">
    <source>
    </source>
</evidence>
<evidence type="ECO:0007744" key="11">
    <source>
        <dbReference type="PDB" id="2GBP"/>
    </source>
</evidence>
<evidence type="ECO:0007829" key="12">
    <source>
        <dbReference type="PDB" id="2FVY"/>
    </source>
</evidence>
<evidence type="ECO:0007829" key="13">
    <source>
        <dbReference type="PDB" id="2IPM"/>
    </source>
</evidence>
<sequence length="332" mass="35713">MNKKVLTLSAVMASMLFGAAAHAADTRIGVTIYKYDDNFMSVVRKAIEQDAKAAPDVQLLMNDSQNDQSKQNDQIDVLLAKGVKALAINLVDPAAAGTVIEKARGQNVPVVFFNKEPSRKALDSYDKAYYVGTDSKESGIIQGDLIAKHWAANQGWDLNKDGQIQFVLLKGEPGHPDAEARTTYVIKELNDKGIKTEQLQLDTAMWDTAQAKDKMDAWLSGPNANKIEVVIANNDAMAMGAVEALKAHNKSSIPVFGVDALPEALALVKSGALAGTVLNDANNQAKATFDLAKNLADGKGAADGTNWKIDNKVVRVPYVGVDKDNLAEFSKK</sequence>
<protein>
    <recommendedName>
        <fullName evidence="8">D-galactose/methyl-galactoside binding periplasmic protein MglB</fullName>
    </recommendedName>
    <alternativeName>
        <fullName>D-galactose-binding periplasmic protein</fullName>
        <shortName>GBP</shortName>
    </alternativeName>
    <alternativeName>
        <fullName>D-galactose/D-glucose-binding protein</fullName>
        <shortName>GGBP</shortName>
    </alternativeName>
</protein>
<reference key="1">
    <citation type="journal article" date="1991" name="Mol. Gen. Genet.">
        <title>Nucleotide sequence and analysis of the mgl operon of Escherichia coli K12.</title>
        <authorList>
            <person name="Hogg R.W."/>
            <person name="Voelker C."/>
            <person name="von Carlowitz I."/>
        </authorList>
    </citation>
    <scope>NUCLEOTIDE SEQUENCE [GENOMIC DNA]</scope>
    <scope>SUBUNIT</scope>
    <source>
        <strain>K12</strain>
    </source>
</reference>
<reference key="2">
    <citation type="journal article" date="1987" name="Mol. Gen. Genet.">
        <title>Sequence of the mglB gene from Escherichia coli K12: comparison of wild-type and mutant galactose chemoreceptors.</title>
        <authorList>
            <person name="Scholle A."/>
            <person name="Vreemann J."/>
            <person name="Blank V."/>
            <person name="Nold A."/>
            <person name="Boos W."/>
            <person name="Manson M.D."/>
        </authorList>
    </citation>
    <scope>NUCLEOTIDE SEQUENCE [GENOMIC DNA]</scope>
    <scope>MUTAGENESIS OF GLY-74</scope>
    <source>
        <strain>K12</strain>
    </source>
</reference>
<reference key="3">
    <citation type="submission" date="1993-10" db="EMBL/GenBank/DDBJ databases">
        <authorList>
            <person name="Richterich P."/>
            <person name="Lakey N."/>
            <person name="Gryan G."/>
            <person name="Jaehn L."/>
            <person name="Mintz L."/>
            <person name="Robison K."/>
            <person name="Church G.M."/>
        </authorList>
    </citation>
    <scope>NUCLEOTIDE SEQUENCE [GENOMIC DNA]</scope>
    <source>
        <strain>K12 / BHB2600</strain>
    </source>
</reference>
<reference key="4">
    <citation type="journal article" date="1997" name="Science">
        <title>The complete genome sequence of Escherichia coli K-12.</title>
        <authorList>
            <person name="Blattner F.R."/>
            <person name="Plunkett G. III"/>
            <person name="Bloch C.A."/>
            <person name="Perna N.T."/>
            <person name="Burland V."/>
            <person name="Riley M."/>
            <person name="Collado-Vides J."/>
            <person name="Glasner J.D."/>
            <person name="Rode C.K."/>
            <person name="Mayhew G.F."/>
            <person name="Gregor J."/>
            <person name="Davis N.W."/>
            <person name="Kirkpatrick H.A."/>
            <person name="Goeden M.A."/>
            <person name="Rose D.J."/>
            <person name="Mau B."/>
            <person name="Shao Y."/>
        </authorList>
    </citation>
    <scope>NUCLEOTIDE SEQUENCE [LARGE SCALE GENOMIC DNA]</scope>
    <source>
        <strain>K12 / MG1655 / ATCC 47076</strain>
    </source>
</reference>
<reference key="5">
    <citation type="journal article" date="2006" name="Mol. Syst. Biol.">
        <title>Highly accurate genome sequences of Escherichia coli K-12 strains MG1655 and W3110.</title>
        <authorList>
            <person name="Hayashi K."/>
            <person name="Morooka N."/>
            <person name="Yamamoto Y."/>
            <person name="Fujita K."/>
            <person name="Isono K."/>
            <person name="Choi S."/>
            <person name="Ohtsubo E."/>
            <person name="Baba T."/>
            <person name="Wanner B.L."/>
            <person name="Mori H."/>
            <person name="Horiuchi T."/>
        </authorList>
    </citation>
    <scope>NUCLEOTIDE SEQUENCE [LARGE SCALE GENOMIC DNA]</scope>
    <source>
        <strain>K12 / W3110 / ATCC 27325 / DSM 5911</strain>
    </source>
</reference>
<reference key="6">
    <citation type="journal article" date="1981" name="J. Biol. Chem.">
        <title>The amino acid sequence of the D-galactose-binding protein from Escherichia coli B/r.</title>
        <authorList>
            <person name="Mahoney W.C."/>
            <person name="Hogg R.W."/>
            <person name="Hermodson M.A."/>
        </authorList>
    </citation>
    <scope>PROTEIN SEQUENCE OF 24-332</scope>
</reference>
<reference key="7">
    <citation type="submission" date="1982-11" db="PIR data bank">
        <authorList>
            <person name="Mahoney W.C."/>
            <person name="Hogg R.W."/>
            <person name="Hermodson M.A."/>
        </authorList>
    </citation>
    <scope>SEQUENCE REVISION TO 179-180</scope>
</reference>
<reference key="8">
    <citation type="journal article" date="1983" name="J. Biol. Chem.">
        <title>The nucleotide sequences defining the signal peptides of the galactose-binding protein and the arabinose-binding protein.</title>
        <authorList>
            <person name="Scripture J.B."/>
            <person name="Hogg R.W."/>
        </authorList>
    </citation>
    <scope>NUCLEOTIDE SEQUENCE [GENOMIC DNA] OF 1-58</scope>
</reference>
<reference key="9">
    <citation type="journal article" date="1997" name="Electrophoresis">
        <title>Comparing the predicted and observed properties of proteins encoded in the genome of Escherichia coli K-12.</title>
        <authorList>
            <person name="Link A.J."/>
            <person name="Robison K."/>
            <person name="Church G.M."/>
        </authorList>
    </citation>
    <scope>PROTEIN SEQUENCE OF 24-47</scope>
    <source>
        <strain>K12 / EMG2</strain>
    </source>
</reference>
<reference key="10">
    <citation type="journal article" date="1971" name="Nature New Biol.">
        <title>Role of the galactose binding protein in chemotaxis of Escherichia coli toward galactose.</title>
        <authorList>
            <person name="Hazelbauer G.L."/>
            <person name="Adler J."/>
        </authorList>
    </citation>
    <scope>FUNCTION IN CHEMOTAXIS</scope>
</reference>
<reference key="11">
    <citation type="journal article" date="1983" name="J. Bacteriol.">
        <title>Characterization of the mgl operon of Escherichia coli by transposon mutagenesis and molecular cloning.</title>
        <authorList>
            <person name="Harayama S."/>
            <person name="Bollinger J."/>
            <person name="Iino T."/>
            <person name="Hazelbauer G.L."/>
        </authorList>
    </citation>
    <scope>FUNCTION IN TRANSPORT</scope>
    <scope>FUNCTION IN CHEMOTAXIS</scope>
</reference>
<reference key="12">
    <citation type="journal article" date="1997" name="Electrophoresis">
        <title>Escherichia coli proteome analysis using the gene-protein database.</title>
        <authorList>
            <person name="VanBogelen R.A."/>
            <person name="Abshire K.Z."/>
            <person name="Moldover B."/>
            <person name="Olson E.R."/>
            <person name="Neidhardt F.C."/>
        </authorList>
    </citation>
    <scope>IDENTIFICATION BY 2D-GEL</scope>
</reference>
<reference key="13">
    <citation type="journal article" date="1983" name="Proc. Natl. Acad. Sci. U.S.A.">
        <title>The 3-A resolution structure of a D-galactose-binding protein for transport and chemotaxis in Escherichia coli.</title>
        <authorList>
            <person name="Vyas N.K."/>
            <person name="Vyas M.N."/>
            <person name="Quiocho F.A."/>
        </authorList>
    </citation>
    <scope>X-RAY CRYSTALLOGRAPHY (3.0 ANGSTROMS)</scope>
</reference>
<reference key="14">
    <citation type="journal article" date="1987" name="Nature">
        <title>A novel calcium binding site in the galactose-binding protein of bacterial transport and chemotaxis.</title>
        <authorList>
            <person name="Vyas N.K."/>
            <person name="Vyas M.N."/>
            <person name="Quiocho F.A."/>
        </authorList>
    </citation>
    <scope>X-RAY CRYSTALLOGRAPHY (1.9 ANGSTROMS) IN COMPLEX WITH CALCIUM</scope>
</reference>
<reference evidence="11" key="15">
    <citation type="journal article" date="1988" name="Science">
        <title>Sugar and signal-transducer binding sites of the Escherichia coli galactose chemoreceptor protein.</title>
        <authorList>
            <person name="Vyas N.K."/>
            <person name="Vyas M.N."/>
            <person name="Quiocho F.A."/>
        </authorList>
    </citation>
    <scope>X-RAY CRYSTALLOGRAPHY (1.9 ANGSTROMS) OF 24-332 IN COMPLEX WITH CALCIUM AND BETA-D-GLUCOSE</scope>
    <scope>FUNCTION</scope>
</reference>
<gene>
    <name type="primary">mglB</name>
    <name type="ordered locus">b2150</name>
    <name type="ordered locus">JW2137</name>
</gene>
<proteinExistence type="evidence at protein level"/>
<keyword id="KW-0002">3D-structure</keyword>
<keyword id="KW-0106">Calcium</keyword>
<keyword id="KW-0145">Chemotaxis</keyword>
<keyword id="KW-0903">Direct protein sequencing</keyword>
<keyword id="KW-0479">Metal-binding</keyword>
<keyword id="KW-0574">Periplasm</keyword>
<keyword id="KW-1185">Reference proteome</keyword>
<keyword id="KW-0732">Signal</keyword>
<keyword id="KW-0762">Sugar transport</keyword>
<keyword id="KW-0813">Transport</keyword>
<organism>
    <name type="scientific">Escherichia coli (strain K12)</name>
    <dbReference type="NCBI Taxonomy" id="83333"/>
    <lineage>
        <taxon>Bacteria</taxon>
        <taxon>Pseudomonadati</taxon>
        <taxon>Pseudomonadota</taxon>
        <taxon>Gammaproteobacteria</taxon>
        <taxon>Enterobacterales</taxon>
        <taxon>Enterobacteriaceae</taxon>
        <taxon>Escherichia</taxon>
    </lineage>
</organism>
<accession>P0AEE5</accession>
<accession>P02927</accession>
<accession>P17775</accession>
<accession>Q2MAS9</accession>
<feature type="signal peptide" evidence="6 7">
    <location>
        <begin position="1"/>
        <end position="23"/>
    </location>
</feature>
<feature type="chain" id="PRO_0000031722" description="D-galactose/methyl-galactoside binding periplasmic protein MglB">
    <location>
        <begin position="24"/>
        <end position="332"/>
    </location>
</feature>
<feature type="binding site" evidence="1">
    <location>
        <position position="37"/>
    </location>
    <ligand>
        <name>beta-D-galactose</name>
        <dbReference type="ChEBI" id="CHEBI:27667"/>
    </ligand>
</feature>
<feature type="binding site" evidence="2 11">
    <location>
        <position position="37"/>
    </location>
    <ligand>
        <name>beta-D-glucose</name>
        <dbReference type="ChEBI" id="CHEBI:15903"/>
    </ligand>
</feature>
<feature type="binding site" evidence="1">
    <location>
        <position position="114"/>
    </location>
    <ligand>
        <name>beta-D-galactose</name>
        <dbReference type="ChEBI" id="CHEBI:27667"/>
    </ligand>
</feature>
<feature type="binding site" evidence="2 11">
    <location>
        <position position="114"/>
    </location>
    <ligand>
        <name>beta-D-glucose</name>
        <dbReference type="ChEBI" id="CHEBI:15903"/>
    </ligand>
</feature>
<feature type="binding site" evidence="2 3 11">
    <location>
        <position position="157"/>
    </location>
    <ligand>
        <name>Ca(2+)</name>
        <dbReference type="ChEBI" id="CHEBI:29108"/>
    </ligand>
</feature>
<feature type="binding site" evidence="2 3 11">
    <location>
        <position position="159"/>
    </location>
    <ligand>
        <name>Ca(2+)</name>
        <dbReference type="ChEBI" id="CHEBI:29108"/>
    </ligand>
</feature>
<feature type="binding site" evidence="2 3 11">
    <location>
        <position position="161"/>
    </location>
    <ligand>
        <name>Ca(2+)</name>
        <dbReference type="ChEBI" id="CHEBI:29108"/>
    </ligand>
</feature>
<feature type="binding site" evidence="2 3 11">
    <location>
        <position position="163"/>
    </location>
    <ligand>
        <name>Ca(2+)</name>
        <dbReference type="ChEBI" id="CHEBI:29108"/>
    </ligand>
</feature>
<feature type="binding site" evidence="2 3 11">
    <location>
        <position position="165"/>
    </location>
    <ligand>
        <name>Ca(2+)</name>
        <dbReference type="ChEBI" id="CHEBI:29108"/>
    </ligand>
</feature>
<feature type="binding site" evidence="1">
    <location>
        <position position="175"/>
    </location>
    <ligand>
        <name>beta-D-galactose</name>
        <dbReference type="ChEBI" id="CHEBI:27667"/>
    </ligand>
</feature>
<feature type="binding site" evidence="2 11">
    <location>
        <position position="175"/>
    </location>
    <ligand>
        <name>beta-D-glucose</name>
        <dbReference type="ChEBI" id="CHEBI:15903"/>
    </ligand>
</feature>
<feature type="binding site" evidence="1">
    <location>
        <position position="177"/>
    </location>
    <ligand>
        <name>beta-D-galactose</name>
        <dbReference type="ChEBI" id="CHEBI:27667"/>
    </ligand>
</feature>
<feature type="binding site" evidence="2 11">
    <location>
        <position position="177"/>
    </location>
    <ligand>
        <name>beta-D-glucose</name>
        <dbReference type="ChEBI" id="CHEBI:15903"/>
    </ligand>
</feature>
<feature type="binding site" evidence="1">
    <location>
        <position position="181"/>
    </location>
    <ligand>
        <name>beta-D-galactose</name>
        <dbReference type="ChEBI" id="CHEBI:27667"/>
    </ligand>
</feature>
<feature type="binding site" evidence="2 11">
    <location>
        <position position="181"/>
    </location>
    <ligand>
        <name>beta-D-glucose</name>
        <dbReference type="ChEBI" id="CHEBI:15903"/>
    </ligand>
</feature>
<feature type="binding site" evidence="2 3 11">
    <location>
        <position position="228"/>
    </location>
    <ligand>
        <name>Ca(2+)</name>
        <dbReference type="ChEBI" id="CHEBI:29108"/>
    </ligand>
</feature>
<feature type="binding site" evidence="1">
    <location>
        <position position="234"/>
    </location>
    <ligand>
        <name>beta-D-galactose</name>
        <dbReference type="ChEBI" id="CHEBI:27667"/>
    </ligand>
</feature>
<feature type="binding site" evidence="2 11">
    <location>
        <position position="234"/>
    </location>
    <ligand>
        <name>beta-D-glucose</name>
        <dbReference type="ChEBI" id="CHEBI:15903"/>
    </ligand>
</feature>
<feature type="binding site" evidence="1">
    <location>
        <position position="259"/>
    </location>
    <ligand>
        <name>beta-D-galactose</name>
        <dbReference type="ChEBI" id="CHEBI:27667"/>
    </ligand>
</feature>
<feature type="binding site" evidence="2 11">
    <location>
        <position position="259"/>
    </location>
    <ligand>
        <name>beta-D-glucose</name>
        <dbReference type="ChEBI" id="CHEBI:15903"/>
    </ligand>
</feature>
<feature type="binding site" evidence="1">
    <location>
        <position position="279"/>
    </location>
    <ligand>
        <name>beta-D-galactose</name>
        <dbReference type="ChEBI" id="CHEBI:27667"/>
    </ligand>
</feature>
<feature type="binding site" evidence="2 11">
    <location>
        <position position="279"/>
    </location>
    <ligand>
        <name>beta-D-glucose</name>
        <dbReference type="ChEBI" id="CHEBI:15903"/>
    </ligand>
</feature>
<feature type="site" description="Interacts with membrane-bound trg signal transducer">
    <location>
        <position position="97"/>
    </location>
</feature>
<feature type="mutagenesis site" description="Improductive interaction with trg.">
    <original>G</original>
    <variation>D</variation>
    <location>
        <position position="97"/>
    </location>
</feature>
<feature type="strand" evidence="12">
    <location>
        <begin position="26"/>
        <end position="33"/>
    </location>
</feature>
<feature type="helix" evidence="12">
    <location>
        <begin position="38"/>
        <end position="52"/>
    </location>
</feature>
<feature type="strand" evidence="12">
    <location>
        <begin position="57"/>
        <end position="63"/>
    </location>
</feature>
<feature type="helix" evidence="12">
    <location>
        <begin position="68"/>
        <end position="80"/>
    </location>
</feature>
<feature type="strand" evidence="12">
    <location>
        <begin position="84"/>
        <end position="88"/>
    </location>
</feature>
<feature type="helix" evidence="12">
    <location>
        <begin position="93"/>
        <end position="95"/>
    </location>
</feature>
<feature type="helix" evidence="12">
    <location>
        <begin position="96"/>
        <end position="104"/>
    </location>
</feature>
<feature type="turn" evidence="12">
    <location>
        <begin position="105"/>
        <end position="107"/>
    </location>
</feature>
<feature type="strand" evidence="12">
    <location>
        <begin position="110"/>
        <end position="115"/>
    </location>
</feature>
<feature type="helix" evidence="12">
    <location>
        <begin position="119"/>
        <end position="123"/>
    </location>
</feature>
<feature type="strand" evidence="12">
    <location>
        <begin position="128"/>
        <end position="132"/>
    </location>
</feature>
<feature type="helix" evidence="12">
    <location>
        <begin position="135"/>
        <end position="152"/>
    </location>
</feature>
<feature type="helix" evidence="12">
    <location>
        <begin position="154"/>
        <end position="156"/>
    </location>
</feature>
<feature type="strand" evidence="12">
    <location>
        <begin position="161"/>
        <end position="170"/>
    </location>
</feature>
<feature type="helix" evidence="12">
    <location>
        <begin position="176"/>
        <end position="191"/>
    </location>
</feature>
<feature type="strand" evidence="12">
    <location>
        <begin position="196"/>
        <end position="203"/>
    </location>
</feature>
<feature type="helix" evidence="12">
    <location>
        <begin position="208"/>
        <end position="219"/>
    </location>
</feature>
<feature type="helix" evidence="12">
    <location>
        <begin position="224"/>
        <end position="226"/>
    </location>
</feature>
<feature type="strand" evidence="12">
    <location>
        <begin position="229"/>
        <end position="234"/>
    </location>
</feature>
<feature type="helix" evidence="12">
    <location>
        <begin position="235"/>
        <end position="247"/>
    </location>
</feature>
<feature type="helix" evidence="12">
    <location>
        <begin position="262"/>
        <end position="269"/>
    </location>
</feature>
<feature type="strand" evidence="13">
    <location>
        <begin position="271"/>
        <end position="273"/>
    </location>
</feature>
<feature type="strand" evidence="12">
    <location>
        <begin position="275"/>
        <end position="278"/>
    </location>
</feature>
<feature type="helix" evidence="12">
    <location>
        <begin position="281"/>
        <end position="296"/>
    </location>
</feature>
<feature type="turn" evidence="12">
    <location>
        <begin position="301"/>
        <end position="304"/>
    </location>
</feature>
<feature type="strand" evidence="12">
    <location>
        <begin position="313"/>
        <end position="315"/>
    </location>
</feature>
<feature type="strand" evidence="12">
    <location>
        <begin position="319"/>
        <end position="321"/>
    </location>
</feature>
<feature type="turn" evidence="12">
    <location>
        <begin position="323"/>
        <end position="325"/>
    </location>
</feature>
<feature type="helix" evidence="12">
    <location>
        <begin position="326"/>
        <end position="328"/>
    </location>
</feature>
<dbReference type="EMBL" id="M59444">
    <property type="protein sequence ID" value="AAA24169.1"/>
    <property type="molecule type" value="Genomic_DNA"/>
</dbReference>
<dbReference type="EMBL" id="U00007">
    <property type="protein sequence ID" value="AAA60523.1"/>
    <property type="molecule type" value="Genomic_DNA"/>
</dbReference>
<dbReference type="EMBL" id="X05646">
    <property type="protein sequence ID" value="CAA29132.1"/>
    <property type="molecule type" value="Genomic_DNA"/>
</dbReference>
<dbReference type="EMBL" id="U00096">
    <property type="protein sequence ID" value="AAC75211.1"/>
    <property type="molecule type" value="Genomic_DNA"/>
</dbReference>
<dbReference type="EMBL" id="AP009048">
    <property type="protein sequence ID" value="BAE76627.1"/>
    <property type="molecule type" value="Genomic_DNA"/>
</dbReference>
<dbReference type="EMBL" id="K00419">
    <property type="protein sequence ID" value="AAA24172.1"/>
    <property type="molecule type" value="Genomic_DNA"/>
</dbReference>
<dbReference type="PIR" id="A37277">
    <property type="entry name" value="JGECG"/>
</dbReference>
<dbReference type="RefSeq" id="NP_416655.1">
    <property type="nucleotide sequence ID" value="NC_000913.3"/>
</dbReference>
<dbReference type="RefSeq" id="WP_001036964.1">
    <property type="nucleotide sequence ID" value="NZ_STEB01000002.1"/>
</dbReference>
<dbReference type="PDB" id="1GLG">
    <property type="method" value="X-ray"/>
    <property type="resolution" value="2.00 A"/>
    <property type="chains" value="A=24-332"/>
</dbReference>
<dbReference type="PDB" id="2FVY">
    <property type="method" value="X-ray"/>
    <property type="resolution" value="0.92 A"/>
    <property type="chains" value="A=24-332"/>
</dbReference>
<dbReference type="PDB" id="2FW0">
    <property type="method" value="X-ray"/>
    <property type="resolution" value="1.55 A"/>
    <property type="chains" value="A=24-332"/>
</dbReference>
<dbReference type="PDB" id="2GBP">
    <property type="method" value="X-ray"/>
    <property type="resolution" value="1.90 A"/>
    <property type="chains" value="A=24-332"/>
</dbReference>
<dbReference type="PDB" id="2HPH">
    <property type="method" value="X-ray"/>
    <property type="resolution" value="1.33 A"/>
    <property type="chains" value="A=24-332"/>
</dbReference>
<dbReference type="PDB" id="2IPL">
    <property type="method" value="X-ray"/>
    <property type="resolution" value="1.20 A"/>
    <property type="chains" value="A=24-332"/>
</dbReference>
<dbReference type="PDB" id="2IPM">
    <property type="method" value="X-ray"/>
    <property type="resolution" value="1.12 A"/>
    <property type="chains" value="A=24-332"/>
</dbReference>
<dbReference type="PDB" id="2IPN">
    <property type="method" value="X-ray"/>
    <property type="resolution" value="1.15 A"/>
    <property type="chains" value="A=24-332"/>
</dbReference>
<dbReference type="PDB" id="2QW1">
    <property type="method" value="X-ray"/>
    <property type="resolution" value="1.70 A"/>
    <property type="chains" value="A=24-332"/>
</dbReference>
<dbReference type="PDB" id="8FXT">
    <property type="method" value="X-ray"/>
    <property type="resolution" value="1.53 A"/>
    <property type="chains" value="A=26-329"/>
</dbReference>
<dbReference type="PDBsum" id="1GLG"/>
<dbReference type="PDBsum" id="2FVY"/>
<dbReference type="PDBsum" id="2FW0"/>
<dbReference type="PDBsum" id="2GBP"/>
<dbReference type="PDBsum" id="2HPH"/>
<dbReference type="PDBsum" id="2IPL"/>
<dbReference type="PDBsum" id="2IPM"/>
<dbReference type="PDBsum" id="2IPN"/>
<dbReference type="PDBsum" id="2QW1"/>
<dbReference type="PDBsum" id="8FXT"/>
<dbReference type="BMRB" id="P0AEE5"/>
<dbReference type="SMR" id="P0AEE5"/>
<dbReference type="BioGRID" id="4259172">
    <property type="interactions" value="21"/>
</dbReference>
<dbReference type="BioGRID" id="853285">
    <property type="interactions" value="1"/>
</dbReference>
<dbReference type="ComplexPortal" id="CPX-4341">
    <property type="entry name" value="Beta-methyl-D-galactoside/galactose ABC transporter complex"/>
</dbReference>
<dbReference type="DIP" id="DIP-35953N"/>
<dbReference type="FunCoup" id="P0AEE5">
    <property type="interactions" value="282"/>
</dbReference>
<dbReference type="IntAct" id="P0AEE5">
    <property type="interactions" value="8"/>
</dbReference>
<dbReference type="STRING" id="511145.b2150"/>
<dbReference type="DrugBank" id="DB02379">
    <property type="generic name" value="Beta-D-Glucose"/>
</dbReference>
<dbReference type="TCDB" id="3.A.1.2.3">
    <property type="family name" value="the atp-binding cassette (abc) superfamily"/>
</dbReference>
<dbReference type="jPOST" id="P0AEE5"/>
<dbReference type="PaxDb" id="511145-b2150"/>
<dbReference type="EnsemblBacteria" id="AAC75211">
    <property type="protein sequence ID" value="AAC75211"/>
    <property type="gene ID" value="b2150"/>
</dbReference>
<dbReference type="GeneID" id="93775032"/>
<dbReference type="GeneID" id="949041"/>
<dbReference type="KEGG" id="ecj:JW2137"/>
<dbReference type="KEGG" id="eco:b2150"/>
<dbReference type="KEGG" id="ecoc:C3026_12045"/>
<dbReference type="PATRIC" id="fig|1411691.4.peg.91"/>
<dbReference type="EchoBASE" id="EB0588"/>
<dbReference type="eggNOG" id="COG1879">
    <property type="taxonomic scope" value="Bacteria"/>
</dbReference>
<dbReference type="HOGENOM" id="CLU_037628_3_1_6"/>
<dbReference type="InParanoid" id="P0AEE5"/>
<dbReference type="OMA" id="MWDAAMA"/>
<dbReference type="OrthoDB" id="9769193at2"/>
<dbReference type="PhylomeDB" id="P0AEE5"/>
<dbReference type="BioCyc" id="EcoCyc:MGLB-MONOMER"/>
<dbReference type="BioCyc" id="MetaCyc:MGLB-MONOMER"/>
<dbReference type="EvolutionaryTrace" id="P0AEE5"/>
<dbReference type="PRO" id="PR:P0AEE5"/>
<dbReference type="Proteomes" id="UP000000625">
    <property type="component" value="Chromosome"/>
</dbReference>
<dbReference type="GO" id="GO:0055052">
    <property type="term" value="C:ATP-binding cassette (ABC) transporter complex, substrate-binding subunit-containing"/>
    <property type="evidence" value="ECO:0000303"/>
    <property type="project" value="ComplexPortal"/>
</dbReference>
<dbReference type="GO" id="GO:0016020">
    <property type="term" value="C:membrane"/>
    <property type="evidence" value="ECO:0000303"/>
    <property type="project" value="ComplexPortal"/>
</dbReference>
<dbReference type="GO" id="GO:0030288">
    <property type="term" value="C:outer membrane-bounded periplasmic space"/>
    <property type="evidence" value="ECO:0000314"/>
    <property type="project" value="EcoCyc"/>
</dbReference>
<dbReference type="GO" id="GO:0005509">
    <property type="term" value="F:calcium ion binding"/>
    <property type="evidence" value="ECO:0000314"/>
    <property type="project" value="EcoCyc"/>
</dbReference>
<dbReference type="GO" id="GO:0030246">
    <property type="term" value="F:carbohydrate binding"/>
    <property type="evidence" value="ECO:0000318"/>
    <property type="project" value="GO_Central"/>
</dbReference>
<dbReference type="GO" id="GO:0006935">
    <property type="term" value="P:chemotaxis"/>
    <property type="evidence" value="ECO:0000315"/>
    <property type="project" value="EcoCyc"/>
</dbReference>
<dbReference type="GO" id="GO:0015757">
    <property type="term" value="P:galactose transmembrane transport"/>
    <property type="evidence" value="ECO:0000315"/>
    <property type="project" value="EcoCyc"/>
</dbReference>
<dbReference type="GO" id="GO:0015765">
    <property type="term" value="P:methylgalactoside transport"/>
    <property type="evidence" value="ECO:0000315"/>
    <property type="project" value="EcoCyc"/>
</dbReference>
<dbReference type="CDD" id="cd01539">
    <property type="entry name" value="PBP1_GGBP"/>
    <property type="match status" value="1"/>
</dbReference>
<dbReference type="FunFam" id="3.40.50.2300:FF:000038">
    <property type="entry name" value="Galactose ABC transporter substrate-binding protein"/>
    <property type="match status" value="1"/>
</dbReference>
<dbReference type="Gene3D" id="3.40.50.2300">
    <property type="match status" value="2"/>
</dbReference>
<dbReference type="InterPro" id="IPR050555">
    <property type="entry name" value="Bact_Solute-Bind_Prot2"/>
</dbReference>
<dbReference type="InterPro" id="IPR044085">
    <property type="entry name" value="MglB-like_PBP1"/>
</dbReference>
<dbReference type="InterPro" id="IPR028082">
    <property type="entry name" value="Peripla_BP_I"/>
</dbReference>
<dbReference type="InterPro" id="IPR025997">
    <property type="entry name" value="SBP_2_dom"/>
</dbReference>
<dbReference type="NCBIfam" id="NF011924">
    <property type="entry name" value="PRK15395.1"/>
    <property type="match status" value="1"/>
</dbReference>
<dbReference type="PANTHER" id="PTHR30036:SF2">
    <property type="entry name" value="D-GALACTOSE_METHYL-GALACTOSIDE BINDING PERIPLASMIC PROTEIN MGLB"/>
    <property type="match status" value="1"/>
</dbReference>
<dbReference type="PANTHER" id="PTHR30036">
    <property type="entry name" value="D-XYLOSE-BINDING PERIPLASMIC PROTEIN"/>
    <property type="match status" value="1"/>
</dbReference>
<dbReference type="Pfam" id="PF13407">
    <property type="entry name" value="Peripla_BP_4"/>
    <property type="match status" value="1"/>
</dbReference>
<dbReference type="SUPFAM" id="SSF53822">
    <property type="entry name" value="Periplasmic binding protein-like I"/>
    <property type="match status" value="1"/>
</dbReference>
<comment type="function">
    <text evidence="2 4 5 9 10">Part of the ABC transporter complex MglABC involved in galactose/methyl galactoside import (Probable). In addition, binds D-galactose and D-glucose and plays a role in the chemotaxis towards these two sugars by interacting with the Trg chemoreceptor (PubMed:3057628, PubMed:4927373). Chemotaxis requires MglB, but not MglA or MglC (PubMed:6294056).</text>
</comment>
<comment type="subunit">
    <text evidence="9">The ABC transporter complex is composed of one ATP-binding protein (MglA), two transmembrane proteins (MglC) and a solute-binding protein (MglB).</text>
</comment>
<comment type="subcellular location">
    <subcellularLocation>
        <location>Periplasm</location>
    </subcellularLocation>
</comment>
<comment type="domain">
    <text>The calcium-binding site is structurally similar to that of EF-hand proteins, but is in two parts, with the last calcium ligand provided by Glu-228.</text>
</comment>
<comment type="similarity">
    <text evidence="8">Belongs to the bacterial solute-binding protein 2 family.</text>
</comment>
<name>MGLB_ECOLI</name>